<comment type="function">
    <text evidence="1">Involved in DNA repair and RecF pathway recombination.</text>
</comment>
<comment type="similarity">
    <text evidence="1">Belongs to the RecO family.</text>
</comment>
<organism>
    <name type="scientific">Anaeromyxobacter dehalogenans (strain 2CP-C)</name>
    <dbReference type="NCBI Taxonomy" id="290397"/>
    <lineage>
        <taxon>Bacteria</taxon>
        <taxon>Pseudomonadati</taxon>
        <taxon>Myxococcota</taxon>
        <taxon>Myxococcia</taxon>
        <taxon>Myxococcales</taxon>
        <taxon>Cystobacterineae</taxon>
        <taxon>Anaeromyxobacteraceae</taxon>
        <taxon>Anaeromyxobacter</taxon>
    </lineage>
</organism>
<protein>
    <recommendedName>
        <fullName evidence="1">DNA repair protein RecO</fullName>
    </recommendedName>
    <alternativeName>
        <fullName evidence="1">Recombination protein O</fullName>
    </alternativeName>
</protein>
<dbReference type="EMBL" id="CP000251">
    <property type="protein sequence ID" value="ABC81077.1"/>
    <property type="molecule type" value="Genomic_DNA"/>
</dbReference>
<dbReference type="RefSeq" id="WP_011420360.1">
    <property type="nucleotide sequence ID" value="NC_007760.1"/>
</dbReference>
<dbReference type="SMR" id="Q2IQJ8"/>
<dbReference type="STRING" id="290397.Adeh_1303"/>
<dbReference type="KEGG" id="ade:Adeh_1303"/>
<dbReference type="eggNOG" id="COG1381">
    <property type="taxonomic scope" value="Bacteria"/>
</dbReference>
<dbReference type="HOGENOM" id="CLU_066632_2_0_7"/>
<dbReference type="OrthoDB" id="9780797at2"/>
<dbReference type="Proteomes" id="UP000001935">
    <property type="component" value="Chromosome"/>
</dbReference>
<dbReference type="GO" id="GO:0043590">
    <property type="term" value="C:bacterial nucleoid"/>
    <property type="evidence" value="ECO:0007669"/>
    <property type="project" value="TreeGrafter"/>
</dbReference>
<dbReference type="GO" id="GO:0006310">
    <property type="term" value="P:DNA recombination"/>
    <property type="evidence" value="ECO:0007669"/>
    <property type="project" value="UniProtKB-UniRule"/>
</dbReference>
<dbReference type="GO" id="GO:0006302">
    <property type="term" value="P:double-strand break repair"/>
    <property type="evidence" value="ECO:0007669"/>
    <property type="project" value="TreeGrafter"/>
</dbReference>
<dbReference type="Gene3D" id="2.40.50.140">
    <property type="entry name" value="Nucleic acid-binding proteins"/>
    <property type="match status" value="1"/>
</dbReference>
<dbReference type="Gene3D" id="1.20.1440.120">
    <property type="entry name" value="Recombination protein O, C-terminal domain"/>
    <property type="match status" value="1"/>
</dbReference>
<dbReference type="HAMAP" id="MF_00201">
    <property type="entry name" value="RecO"/>
    <property type="match status" value="1"/>
</dbReference>
<dbReference type="InterPro" id="IPR037278">
    <property type="entry name" value="ARFGAP/RecO"/>
</dbReference>
<dbReference type="InterPro" id="IPR022572">
    <property type="entry name" value="DNA_rep/recomb_RecO_N"/>
</dbReference>
<dbReference type="InterPro" id="IPR012340">
    <property type="entry name" value="NA-bd_OB-fold"/>
</dbReference>
<dbReference type="InterPro" id="IPR003717">
    <property type="entry name" value="RecO"/>
</dbReference>
<dbReference type="InterPro" id="IPR042242">
    <property type="entry name" value="RecO_C"/>
</dbReference>
<dbReference type="NCBIfam" id="TIGR00613">
    <property type="entry name" value="reco"/>
    <property type="match status" value="1"/>
</dbReference>
<dbReference type="PANTHER" id="PTHR33991">
    <property type="entry name" value="DNA REPAIR PROTEIN RECO"/>
    <property type="match status" value="1"/>
</dbReference>
<dbReference type="PANTHER" id="PTHR33991:SF1">
    <property type="entry name" value="DNA REPAIR PROTEIN RECO"/>
    <property type="match status" value="1"/>
</dbReference>
<dbReference type="Pfam" id="PF02565">
    <property type="entry name" value="RecO_C"/>
    <property type="match status" value="1"/>
</dbReference>
<dbReference type="Pfam" id="PF11967">
    <property type="entry name" value="RecO_N"/>
    <property type="match status" value="1"/>
</dbReference>
<dbReference type="SUPFAM" id="SSF57863">
    <property type="entry name" value="ArfGap/RecO-like zinc finger"/>
    <property type="match status" value="1"/>
</dbReference>
<dbReference type="SUPFAM" id="SSF50249">
    <property type="entry name" value="Nucleic acid-binding proteins"/>
    <property type="match status" value="1"/>
</dbReference>
<sequence>MDRVKLTGVVLRAVDYGESDRVVTLLTAERGKVSAFARGARASRRRFGGALEPFTLLSAEVRERSGSDLLGLDSVSVVRGFGALRGDLGRIACAGYAAELARELVRDHQPHDELFDLLVAYLGALDAAPPRPAALRAFELGALRAAGLMPRLDACARCGAPVGEGPVRFDAGEGGALCGGCAPGVPRTLPLAAGTLAALLRLQEGGLAAAASEPLAAPAGREAREALTAFLEHHLGRRLAARRFLDEIGPLLGG</sequence>
<keyword id="KW-0227">DNA damage</keyword>
<keyword id="KW-0233">DNA recombination</keyword>
<keyword id="KW-0234">DNA repair</keyword>
<keyword id="KW-1185">Reference proteome</keyword>
<name>RECO_ANADE</name>
<reference key="1">
    <citation type="submission" date="2006-01" db="EMBL/GenBank/DDBJ databases">
        <title>Complete sequence of Anaeromyxobacter dehalogenans 2CP-C.</title>
        <authorList>
            <person name="Copeland A."/>
            <person name="Lucas S."/>
            <person name="Lapidus A."/>
            <person name="Barry K."/>
            <person name="Detter J.C."/>
            <person name="Glavina T."/>
            <person name="Hammon N."/>
            <person name="Israni S."/>
            <person name="Pitluck S."/>
            <person name="Brettin T."/>
            <person name="Bruce D."/>
            <person name="Han C."/>
            <person name="Tapia R."/>
            <person name="Gilna P."/>
            <person name="Kiss H."/>
            <person name="Schmutz J."/>
            <person name="Larimer F."/>
            <person name="Land M."/>
            <person name="Kyrpides N."/>
            <person name="Anderson I."/>
            <person name="Sanford R.A."/>
            <person name="Ritalahti K.M."/>
            <person name="Thomas H.S."/>
            <person name="Kirby J.R."/>
            <person name="Zhulin I.B."/>
            <person name="Loeffler F.E."/>
            <person name="Richardson P."/>
        </authorList>
    </citation>
    <scope>NUCLEOTIDE SEQUENCE [LARGE SCALE GENOMIC DNA]</scope>
    <source>
        <strain>2CP-C</strain>
    </source>
</reference>
<feature type="chain" id="PRO_0000264804" description="DNA repair protein RecO">
    <location>
        <begin position="1"/>
        <end position="254"/>
    </location>
</feature>
<evidence type="ECO:0000255" key="1">
    <source>
        <dbReference type="HAMAP-Rule" id="MF_00201"/>
    </source>
</evidence>
<gene>
    <name evidence="1" type="primary">recO</name>
    <name type="ordered locus">Adeh_1303</name>
</gene>
<accession>Q2IQJ8</accession>
<proteinExistence type="inferred from homology"/>